<keyword id="KW-0975">Bacterial flagellum</keyword>
<keyword id="KW-0973">c-di-GMP</keyword>
<keyword id="KW-0547">Nucleotide-binding</keyword>
<reference key="1">
    <citation type="journal article" date="2008" name="J. Biotechnol.">
        <title>The genome of Xanthomonas campestris pv. campestris B100 and its use for the reconstruction of metabolic pathways involved in xanthan biosynthesis.</title>
        <authorList>
            <person name="Vorhoelter F.-J."/>
            <person name="Schneiker S."/>
            <person name="Goesmann A."/>
            <person name="Krause L."/>
            <person name="Bekel T."/>
            <person name="Kaiser O."/>
            <person name="Linke B."/>
            <person name="Patschkowski T."/>
            <person name="Rueckert C."/>
            <person name="Schmid J."/>
            <person name="Sidhu V.K."/>
            <person name="Sieber V."/>
            <person name="Tauch A."/>
            <person name="Watt S.A."/>
            <person name="Weisshaar B."/>
            <person name="Becker A."/>
            <person name="Niehaus K."/>
            <person name="Puehler A."/>
        </authorList>
    </citation>
    <scope>NUCLEOTIDE SEQUENCE [LARGE SCALE GENOMIC DNA]</scope>
    <source>
        <strain>B100</strain>
    </source>
</reference>
<accession>B0RSS7</accession>
<name>YCGR_XANCB</name>
<dbReference type="EMBL" id="AM920689">
    <property type="protein sequence ID" value="CAP51513.1"/>
    <property type="molecule type" value="Genomic_DNA"/>
</dbReference>
<dbReference type="SMR" id="B0RSS7"/>
<dbReference type="KEGG" id="xca:xcc-b100_2160"/>
<dbReference type="HOGENOM" id="CLU_086025_0_0_6"/>
<dbReference type="Proteomes" id="UP000001188">
    <property type="component" value="Chromosome"/>
</dbReference>
<dbReference type="GO" id="GO:0009425">
    <property type="term" value="C:bacterial-type flagellum basal body"/>
    <property type="evidence" value="ECO:0007669"/>
    <property type="project" value="UniProtKB-SubCell"/>
</dbReference>
<dbReference type="GO" id="GO:0035438">
    <property type="term" value="F:cyclic-di-GMP binding"/>
    <property type="evidence" value="ECO:0007669"/>
    <property type="project" value="UniProtKB-UniRule"/>
</dbReference>
<dbReference type="GO" id="GO:0071973">
    <property type="term" value="P:bacterial-type flagellum-dependent cell motility"/>
    <property type="evidence" value="ECO:0007669"/>
    <property type="project" value="UniProtKB-UniRule"/>
</dbReference>
<dbReference type="GO" id="GO:0071945">
    <property type="term" value="P:regulation of bacterial-type flagellum-dependent cell motility by regulation of motor speed"/>
    <property type="evidence" value="ECO:0007669"/>
    <property type="project" value="UniProtKB-UniRule"/>
</dbReference>
<dbReference type="Gene3D" id="2.30.110.10">
    <property type="entry name" value="Electron Transport, Fmn-binding Protein, Chain A"/>
    <property type="match status" value="1"/>
</dbReference>
<dbReference type="Gene3D" id="2.40.10.220">
    <property type="entry name" value="predicted glycosyltransferase like domains"/>
    <property type="match status" value="1"/>
</dbReference>
<dbReference type="HAMAP" id="MF_01457">
    <property type="entry name" value="YcgR"/>
    <property type="match status" value="1"/>
</dbReference>
<dbReference type="InterPro" id="IPR009875">
    <property type="entry name" value="PilZ_domain"/>
</dbReference>
<dbReference type="InterPro" id="IPR012349">
    <property type="entry name" value="Split_barrel_FMN-bd"/>
</dbReference>
<dbReference type="InterPro" id="IPR023787">
    <property type="entry name" value="T3SS_YcgR"/>
</dbReference>
<dbReference type="InterPro" id="IPR009926">
    <property type="entry name" value="T3SS_YcgR_PilZN"/>
</dbReference>
<dbReference type="Pfam" id="PF07238">
    <property type="entry name" value="PilZ"/>
    <property type="match status" value="1"/>
</dbReference>
<dbReference type="Pfam" id="PF07317">
    <property type="entry name" value="PilZN"/>
    <property type="match status" value="1"/>
</dbReference>
<evidence type="ECO:0000255" key="1">
    <source>
        <dbReference type="HAMAP-Rule" id="MF_01457"/>
    </source>
</evidence>
<proteinExistence type="inferred from homology"/>
<feature type="chain" id="PRO_0000395290" description="Flagellar brake protein YcgR">
    <location>
        <begin position="1"/>
        <end position="265"/>
    </location>
</feature>
<feature type="domain" description="PilZ" evidence="1">
    <location>
        <begin position="135"/>
        <end position="252"/>
    </location>
</feature>
<organism>
    <name type="scientific">Xanthomonas campestris pv. campestris (strain B100)</name>
    <dbReference type="NCBI Taxonomy" id="509169"/>
    <lineage>
        <taxon>Bacteria</taxon>
        <taxon>Pseudomonadati</taxon>
        <taxon>Pseudomonadota</taxon>
        <taxon>Gammaproteobacteria</taxon>
        <taxon>Lysobacterales</taxon>
        <taxon>Lysobacteraceae</taxon>
        <taxon>Xanthomonas</taxon>
    </lineage>
</organism>
<comment type="function">
    <text evidence="1">Acts as a flagellar brake, regulating swimming and swarming in a bis-(3'-5') cyclic diguanylic acid (c-di-GMP)-dependent manner. Binds 1 c-di-GMP dimer per subunit. Increasing levels of c-di-GMP lead to decreased motility.</text>
</comment>
<comment type="subunit">
    <text evidence="1">Monomer. Interacts with the flagellar basal bodies.</text>
</comment>
<comment type="subcellular location">
    <subcellularLocation>
        <location evidence="1">Bacterial flagellum basal body</location>
    </subcellularLocation>
</comment>
<comment type="similarity">
    <text evidence="1">Belongs to the YcgR family.</text>
</comment>
<gene>
    <name evidence="1" type="primary">ycgR</name>
    <name type="ordered locus">xcc-b100_2160</name>
</gene>
<protein>
    <recommendedName>
        <fullName evidence="1">Flagellar brake protein YcgR</fullName>
    </recommendedName>
    <alternativeName>
        <fullName evidence="1">Cyclic di-GMP binding protein YcgR</fullName>
    </alternativeName>
</protein>
<sequence length="265" mass="29910">MLVPMSEGDTSELDHDADHLAEGDERYLLRNKRQIRGLLQQLIDQRAVVTMHVAGRDMAVPTAVLEVDEDDDYVILDGSHNDASNRAIEQAKYLLCYAQLERVNIRFRLETPERLERDIHVAFRATLPDSLYHLQRRESYRLETPITDSPTCTIRQDAASGGNLNLQLRVIDISSGGLAVSLATGMPLLEPQHTYRDCTLQLPDSAPIALPLTVCSQYKMTLPNGSEGFRVGMQFSDLPRGADETIQRYIFRVDRQRNARKSGVF</sequence>